<sequence length="570" mass="65849">MKESPLITLVKRHSETHFANIKYGYYVLIISLVYLIGLALLRAFGRRTPSRSSSAFKNKIIYRLYDIDPAIHLGILFFAVLIPFYYHYSLTTQSTVYLKRLGRLSYALIPLNLFLTLRPNWFLRKNCTYTDFIPFHKWFSRIITVIGLLHGIFFIIKWAIDDNVSLKQKLILKTFNFVGFIISILVLFLLICSIGPMRRYNYRLFYIVHNLVNVAFILLTPIHSRPGVKFPFLLLNCTLLFIHIINRIVFAKSLMILNKNANYSKTNLVHVRLPRAILPDYFEPGSHIRISPYRRINPLYWLLPSHPYTIASLAEDNSIDLIIKETSTAEPGSQIESLRSNPKSFHLDQEKTYTLINSYPPSVPEECYSQGTNIAIICGGSGISFALPLFRHFFNKENVKYLKMIWLIKNYSEYELVLDYLKTNGLTFEKKLSNNKRISVFISGEYTAETRLDEITTNIDDENSEYEMGSFNNEDEDLSISNFNSENADSNDNTPETSHSPTKENGSLIEVKSKHSFTLSNELKSFNNESAQVNQNETWLFSCGPPSLLQLSKKYCNDERINFVCETYGL</sequence>
<name>AIM14_YEAS7</name>
<comment type="function">
    <text evidence="1">Probable cell surface metalloreductase. May be involved in iron or copper homeostasis (By similarity).</text>
</comment>
<comment type="subunit">
    <text evidence="1">Interacts with ribosomes.</text>
</comment>
<comment type="subcellular location">
    <subcellularLocation>
        <location evidence="1">Membrane</location>
        <topology>Multi-pass membrane protein</topology>
    </subcellularLocation>
</comment>
<comment type="similarity">
    <text evidence="4">Belongs to the ferric reductase (FRE) family. AIM14 subfamily.</text>
</comment>
<reference key="1">
    <citation type="journal article" date="2007" name="Proc. Natl. Acad. Sci. U.S.A.">
        <title>Genome sequencing and comparative analysis of Saccharomyces cerevisiae strain YJM789.</title>
        <authorList>
            <person name="Wei W."/>
            <person name="McCusker J.H."/>
            <person name="Hyman R.W."/>
            <person name="Jones T."/>
            <person name="Ning Y."/>
            <person name="Cao Z."/>
            <person name="Gu Z."/>
            <person name="Bruno D."/>
            <person name="Miranda M."/>
            <person name="Nguyen M."/>
            <person name="Wilhelmy J."/>
            <person name="Komp C."/>
            <person name="Tamse R."/>
            <person name="Wang X."/>
            <person name="Jia P."/>
            <person name="Luedi P."/>
            <person name="Oefner P.J."/>
            <person name="David L."/>
            <person name="Dietrich F.S."/>
            <person name="Li Y."/>
            <person name="Davis R.W."/>
            <person name="Steinmetz L.M."/>
        </authorList>
    </citation>
    <scope>NUCLEOTIDE SEQUENCE [LARGE SCALE GENOMIC DNA]</scope>
    <source>
        <strain>YJM789</strain>
    </source>
</reference>
<gene>
    <name type="primary">AIM14</name>
    <name type="ORF">SCY_1908</name>
</gene>
<proteinExistence type="inferred from homology"/>
<protein>
    <recommendedName>
        <fullName>Probable metalloreductase AIM14</fullName>
        <ecNumber>1.16.1.-</ecNumber>
    </recommendedName>
    <alternativeName>
        <fullName>Altered inheritance of mitochondria protein 14</fullName>
    </alternativeName>
</protein>
<keyword id="KW-0249">Electron transport</keyword>
<keyword id="KW-0274">FAD</keyword>
<keyword id="KW-0285">Flavoprotein</keyword>
<keyword id="KW-0406">Ion transport</keyword>
<keyword id="KW-0472">Membrane</keyword>
<keyword id="KW-0521">NADP</keyword>
<keyword id="KW-0560">Oxidoreductase</keyword>
<keyword id="KW-0812">Transmembrane</keyword>
<keyword id="KW-1133">Transmembrane helix</keyword>
<keyword id="KW-0813">Transport</keyword>
<evidence type="ECO:0000250" key="1"/>
<evidence type="ECO:0000255" key="2"/>
<evidence type="ECO:0000256" key="3">
    <source>
        <dbReference type="SAM" id="MobiDB-lite"/>
    </source>
</evidence>
<evidence type="ECO:0000305" key="4"/>
<organism>
    <name type="scientific">Saccharomyces cerevisiae (strain YJM789)</name>
    <name type="common">Baker's yeast</name>
    <dbReference type="NCBI Taxonomy" id="307796"/>
    <lineage>
        <taxon>Eukaryota</taxon>
        <taxon>Fungi</taxon>
        <taxon>Dikarya</taxon>
        <taxon>Ascomycota</taxon>
        <taxon>Saccharomycotina</taxon>
        <taxon>Saccharomycetes</taxon>
        <taxon>Saccharomycetales</taxon>
        <taxon>Saccharomycetaceae</taxon>
        <taxon>Saccharomyces</taxon>
    </lineage>
</organism>
<accession>A6ZU25</accession>
<feature type="chain" id="PRO_0000408753" description="Probable metalloreductase AIM14">
    <location>
        <begin position="1"/>
        <end position="570"/>
    </location>
</feature>
<feature type="transmembrane region" description="Helical" evidence="2">
    <location>
        <begin position="21"/>
        <end position="41"/>
    </location>
</feature>
<feature type="transmembrane region" description="Helical" evidence="2">
    <location>
        <begin position="70"/>
        <end position="90"/>
    </location>
</feature>
<feature type="transmembrane region" description="Helical" evidence="2">
    <location>
        <begin position="101"/>
        <end position="118"/>
    </location>
</feature>
<feature type="transmembrane region" description="Helical" evidence="2">
    <location>
        <begin position="142"/>
        <end position="162"/>
    </location>
</feature>
<feature type="transmembrane region" description="Helical" evidence="2">
    <location>
        <begin position="177"/>
        <end position="197"/>
    </location>
</feature>
<feature type="transmembrane region" description="Helical" evidence="2">
    <location>
        <begin position="204"/>
        <end position="224"/>
    </location>
</feature>
<feature type="transmembrane region" description="Helical" evidence="2">
    <location>
        <begin position="230"/>
        <end position="250"/>
    </location>
</feature>
<feature type="domain" description="Ferric oxidoreductase">
    <location>
        <begin position="101"/>
        <end position="219"/>
    </location>
</feature>
<feature type="domain" description="FAD-binding FR-type">
    <location>
        <begin position="250"/>
        <end position="388"/>
    </location>
</feature>
<feature type="region of interest" description="Disordered" evidence="3">
    <location>
        <begin position="481"/>
        <end position="507"/>
    </location>
</feature>
<feature type="compositionally biased region" description="Polar residues" evidence="3">
    <location>
        <begin position="481"/>
        <end position="505"/>
    </location>
</feature>
<dbReference type="EC" id="1.16.1.-"/>
<dbReference type="EMBL" id="AAFW02000099">
    <property type="protein sequence ID" value="EDN61963.1"/>
    <property type="molecule type" value="Genomic_DNA"/>
</dbReference>
<dbReference type="HOGENOM" id="CLU_036508_0_0_1"/>
<dbReference type="Proteomes" id="UP000007060">
    <property type="component" value="Unassembled WGS sequence"/>
</dbReference>
<dbReference type="GO" id="GO:0005886">
    <property type="term" value="C:plasma membrane"/>
    <property type="evidence" value="ECO:0007669"/>
    <property type="project" value="TreeGrafter"/>
</dbReference>
<dbReference type="GO" id="GO:0000293">
    <property type="term" value="F:ferric-chelate reductase activity"/>
    <property type="evidence" value="ECO:0007669"/>
    <property type="project" value="TreeGrafter"/>
</dbReference>
<dbReference type="GO" id="GO:0033215">
    <property type="term" value="P:reductive iron assimilation"/>
    <property type="evidence" value="ECO:0007669"/>
    <property type="project" value="TreeGrafter"/>
</dbReference>
<dbReference type="CDD" id="cd06186">
    <property type="entry name" value="NOX_Duox_like_FAD_NADP"/>
    <property type="match status" value="1"/>
</dbReference>
<dbReference type="Gene3D" id="3.40.50.80">
    <property type="entry name" value="Nucleotide-binding domain of ferredoxin-NADP reductase (FNR) module"/>
    <property type="match status" value="1"/>
</dbReference>
<dbReference type="InterPro" id="IPR013112">
    <property type="entry name" value="FAD-bd_8"/>
</dbReference>
<dbReference type="InterPro" id="IPR013130">
    <property type="entry name" value="Fe3_Rdtase_TM_dom"/>
</dbReference>
<dbReference type="InterPro" id="IPR013121">
    <property type="entry name" value="Fe_red_NAD-bd_6"/>
</dbReference>
<dbReference type="InterPro" id="IPR039261">
    <property type="entry name" value="FNR_nucleotide-bd"/>
</dbReference>
<dbReference type="InterPro" id="IPR050369">
    <property type="entry name" value="RBOH/FRE"/>
</dbReference>
<dbReference type="PANTHER" id="PTHR11972:SF198">
    <property type="entry name" value="METALLOREDUCTASE AIM14-RELATED"/>
    <property type="match status" value="1"/>
</dbReference>
<dbReference type="PANTHER" id="PTHR11972">
    <property type="entry name" value="NADPH OXIDASE"/>
    <property type="match status" value="1"/>
</dbReference>
<dbReference type="Pfam" id="PF08022">
    <property type="entry name" value="FAD_binding_8"/>
    <property type="match status" value="1"/>
</dbReference>
<dbReference type="Pfam" id="PF01794">
    <property type="entry name" value="Ferric_reduct"/>
    <property type="match status" value="1"/>
</dbReference>
<dbReference type="Pfam" id="PF08030">
    <property type="entry name" value="NAD_binding_6"/>
    <property type="match status" value="1"/>
</dbReference>
<dbReference type="SFLD" id="SFLDF00463">
    <property type="entry name" value="AIM14"/>
    <property type="match status" value="1"/>
</dbReference>
<dbReference type="SFLD" id="SFLDS00052">
    <property type="entry name" value="Ferric_Reductase_Domain"/>
    <property type="match status" value="1"/>
</dbReference>
<dbReference type="SFLD" id="SFLDG01168">
    <property type="entry name" value="Ferric_reductase_subgroup_(FRE"/>
    <property type="match status" value="1"/>
</dbReference>